<reference key="1">
    <citation type="submission" date="2007-11" db="EMBL/GenBank/DDBJ databases">
        <authorList>
            <consortium name="The Salmonella enterica serovar Paratyphi B Genome Sequencing Project"/>
            <person name="McClelland M."/>
            <person name="Sanderson E.K."/>
            <person name="Porwollik S."/>
            <person name="Spieth J."/>
            <person name="Clifton W.S."/>
            <person name="Fulton R."/>
            <person name="Cordes M."/>
            <person name="Wollam A."/>
            <person name="Shah N."/>
            <person name="Pepin K."/>
            <person name="Bhonagiri V."/>
            <person name="Nash W."/>
            <person name="Johnson M."/>
            <person name="Thiruvilangam P."/>
            <person name="Wilson R."/>
        </authorList>
    </citation>
    <scope>NUCLEOTIDE SEQUENCE [LARGE SCALE GENOMIC DNA]</scope>
    <source>
        <strain>ATCC BAA-1250 / SPB7</strain>
    </source>
</reference>
<proteinExistence type="inferred from homology"/>
<name>LPLT_SALPB</name>
<accession>A9N3H7</accession>
<gene>
    <name evidence="1" type="primary">lplT</name>
    <name type="ordered locus">SPAB_03745</name>
</gene>
<comment type="function">
    <text evidence="1">Catalyzes the facilitated diffusion of 2-acyl-glycero-3-phosphoethanolamine (2-acyl-GPE) into the cell.</text>
</comment>
<comment type="subcellular location">
    <subcellularLocation>
        <location evidence="1">Cell inner membrane</location>
        <topology evidence="1">Multi-pass membrane protein</topology>
    </subcellularLocation>
</comment>
<comment type="similarity">
    <text evidence="1">Belongs to the major facilitator superfamily. LplT (TC 2.A.1.42) family.</text>
</comment>
<organism>
    <name type="scientific">Salmonella paratyphi B (strain ATCC BAA-1250 / SPB7)</name>
    <dbReference type="NCBI Taxonomy" id="1016998"/>
    <lineage>
        <taxon>Bacteria</taxon>
        <taxon>Pseudomonadati</taxon>
        <taxon>Pseudomonadota</taxon>
        <taxon>Gammaproteobacteria</taxon>
        <taxon>Enterobacterales</taxon>
        <taxon>Enterobacteriaceae</taxon>
        <taxon>Salmonella</taxon>
    </lineage>
</organism>
<feature type="chain" id="PRO_1000087953" description="Lysophospholipid transporter LplT">
    <location>
        <begin position="1"/>
        <end position="400"/>
    </location>
</feature>
<feature type="transmembrane region" description="Helical" evidence="1">
    <location>
        <begin position="19"/>
        <end position="39"/>
    </location>
</feature>
<feature type="transmembrane region" description="Helical" evidence="1">
    <location>
        <begin position="53"/>
        <end position="73"/>
    </location>
</feature>
<feature type="transmembrane region" description="Helical" evidence="1">
    <location>
        <begin position="91"/>
        <end position="111"/>
    </location>
</feature>
<feature type="transmembrane region" description="Helical" evidence="1">
    <location>
        <begin position="139"/>
        <end position="159"/>
    </location>
</feature>
<feature type="transmembrane region" description="Helical" evidence="1">
    <location>
        <begin position="164"/>
        <end position="184"/>
    </location>
</feature>
<feature type="transmembrane region" description="Helical" evidence="1">
    <location>
        <begin position="195"/>
        <end position="213"/>
    </location>
</feature>
<feature type="transmembrane region" description="Helical" evidence="1">
    <location>
        <begin position="227"/>
        <end position="247"/>
    </location>
</feature>
<feature type="transmembrane region" description="Helical" evidence="1">
    <location>
        <begin position="257"/>
        <end position="277"/>
    </location>
</feature>
<feature type="transmembrane region" description="Helical" evidence="1">
    <location>
        <begin position="281"/>
        <end position="301"/>
    </location>
</feature>
<feature type="transmembrane region" description="Helical" evidence="1">
    <location>
        <begin position="304"/>
        <end position="324"/>
    </location>
</feature>
<feature type="transmembrane region" description="Helical" evidence="1">
    <location>
        <begin position="352"/>
        <end position="372"/>
    </location>
</feature>
<feature type="transmembrane region" description="Helical" evidence="1">
    <location>
        <begin position="373"/>
        <end position="393"/>
    </location>
</feature>
<dbReference type="EMBL" id="CP000886">
    <property type="protein sequence ID" value="ABX69080.1"/>
    <property type="molecule type" value="Genomic_DNA"/>
</dbReference>
<dbReference type="RefSeq" id="WP_000004680.1">
    <property type="nucleotide sequence ID" value="NC_010102.1"/>
</dbReference>
<dbReference type="SMR" id="A9N3H7"/>
<dbReference type="KEGG" id="spq:SPAB_03745"/>
<dbReference type="PATRIC" id="fig|1016998.12.peg.3526"/>
<dbReference type="HOGENOM" id="CLU_047399_0_0_6"/>
<dbReference type="BioCyc" id="SENT1016998:SPAB_RS15250-MONOMER"/>
<dbReference type="Proteomes" id="UP000008556">
    <property type="component" value="Chromosome"/>
</dbReference>
<dbReference type="GO" id="GO:0005886">
    <property type="term" value="C:plasma membrane"/>
    <property type="evidence" value="ECO:0007669"/>
    <property type="project" value="UniProtKB-SubCell"/>
</dbReference>
<dbReference type="GO" id="GO:0051978">
    <property type="term" value="F:lysophospholipid:sodium symporter activity"/>
    <property type="evidence" value="ECO:0007669"/>
    <property type="project" value="InterPro"/>
</dbReference>
<dbReference type="CDD" id="cd06173">
    <property type="entry name" value="MFS_MefA_like"/>
    <property type="match status" value="1"/>
</dbReference>
<dbReference type="Gene3D" id="1.20.1250.20">
    <property type="entry name" value="MFS general substrate transporter like domains"/>
    <property type="match status" value="1"/>
</dbReference>
<dbReference type="HAMAP" id="MF_01585">
    <property type="entry name" value="MFS_LplT"/>
    <property type="match status" value="1"/>
</dbReference>
<dbReference type="InterPro" id="IPR023727">
    <property type="entry name" value="LysoPLipid__transptr_LplT"/>
</dbReference>
<dbReference type="InterPro" id="IPR011701">
    <property type="entry name" value="MFS"/>
</dbReference>
<dbReference type="InterPro" id="IPR036259">
    <property type="entry name" value="MFS_trans_sf"/>
</dbReference>
<dbReference type="NCBIfam" id="NF008397">
    <property type="entry name" value="PRK11195.1"/>
    <property type="match status" value="1"/>
</dbReference>
<dbReference type="PANTHER" id="PTHR43266">
    <property type="entry name" value="MACROLIDE-EFFLUX PROTEIN"/>
    <property type="match status" value="1"/>
</dbReference>
<dbReference type="PANTHER" id="PTHR43266:SF2">
    <property type="entry name" value="MAJOR FACILITATOR SUPERFAMILY (MFS) PROFILE DOMAIN-CONTAINING PROTEIN"/>
    <property type="match status" value="1"/>
</dbReference>
<dbReference type="Pfam" id="PF07690">
    <property type="entry name" value="MFS_1"/>
    <property type="match status" value="1"/>
</dbReference>
<dbReference type="SUPFAM" id="SSF103473">
    <property type="entry name" value="MFS general substrate transporter"/>
    <property type="match status" value="1"/>
</dbReference>
<protein>
    <recommendedName>
        <fullName evidence="1">Lysophospholipid transporter LplT</fullName>
    </recommendedName>
</protein>
<sequence length="400" mass="41604">MSESVRTNTSIWSKGMLSVIVAQFLSAFGDNALLFATLALLKAQFYPDWSQPVLQMVFVGAYILFAPFVGQIADSFAKGRVMMVANGLKLAGAAGICLGINPFVGYTLVGIGAAAYSPAKYGILGELTTGDKLVKANGMMEASTIAAILLGSVAGGVLADWHVIAALVACALAYAGAVAANLFIPKLVAARPGQSWRLSAMTRSFFSACVVLWRNGETRFSLVGTGLFWGAGVTLRFLLVLWVPVALGITDNATPTYLNAMVAVGIVVGAGAAAKLVTLETVSRCMPAGILIGVVVAIFSLQHALLPAYALLLLIGMLGGFFVVPLNALLQERGKKSVGAGNAIAVQNLGENSAMLLMLGLYSLAVLVGVPAVAIGIGFGVLFALAIAALWIWQRRQASY</sequence>
<evidence type="ECO:0000255" key="1">
    <source>
        <dbReference type="HAMAP-Rule" id="MF_01585"/>
    </source>
</evidence>
<keyword id="KW-0997">Cell inner membrane</keyword>
<keyword id="KW-1003">Cell membrane</keyword>
<keyword id="KW-0445">Lipid transport</keyword>
<keyword id="KW-0472">Membrane</keyword>
<keyword id="KW-0812">Transmembrane</keyword>
<keyword id="KW-1133">Transmembrane helix</keyword>
<keyword id="KW-0813">Transport</keyword>